<sequence>MSEIEEKFNESSYGADSIKVLKGLEAVRKRPGMYIGDVGDGSGLHHMIYEVVDNAIDESLAGYCDLVRVTLNKNGSVTVSDNGRGIPVEIHGEEGISAAEVIMTQLHAGGKFDQNAYKVAGGLHGVGVSVVNALSEWLELRIWRNNKEYLMRFNNGITEAPLAVVKENIDKKGTEVTFFPSVETFTNIEFDFGTIEHRLRELAFLNSGVKILLVDNRFEEVKEVEFYYTGGIEAYVKYIDRAKHAIHPCIVVNTENAESGISLELAMHWNDSYHENILCFTNNIRQRDGGTHLSAFKSAITRVITSYLDTTGLNKKAKNYFSGEDTREGLCCVLSVKVPDPKFSSQTKDKLVSSEVRPVVENAVYTKVLEWFEEHPAEAKAIIAKIMEAANAREAARKARELTRRKSALEVSNLPGKLADCHAKDPAISELFIVEGDSAGGTAKQGRDSKIQAILPLRGKILNVERARFDKMLGSDQIGTLITALGISVEREFSLEKLRYHKVIIMTDADVDGSHIRTLLLTFFYRHMPELINKGYLYIAQPPLYKVKKGAAEFYLKNEQALQDYLIKSTINDATLILDDKERLVGDNLEELINKVVKFNGLLDHASKKFNRSITEILAINDLLNNKIFEPESDLRLKKALDVLNSLEDSPDKTNWEVLKHENKIEFFRFSRGLKESKILLKEQLESFEFVQISKFALTIFDIFSKQLKLIVKSQEFDILTPSQLLNTIIECGKRGINIQRFKGLGEMNSDQLWETTLDPTKRTLLQVRVAEIDEAEGIFSTLMGDVVEPRRLFIQANALNVVNLDV</sequence>
<evidence type="ECO:0000255" key="1">
    <source>
        <dbReference type="HAMAP-Rule" id="MF_01898"/>
    </source>
</evidence>
<feature type="chain" id="PRO_0000145331" description="DNA gyrase subunit B">
    <location>
        <begin position="1"/>
        <end position="807"/>
    </location>
</feature>
<feature type="domain" description="Toprim" evidence="1">
    <location>
        <begin position="429"/>
        <end position="543"/>
    </location>
</feature>
<feature type="binding site" evidence="1">
    <location>
        <position position="435"/>
    </location>
    <ligand>
        <name>Mg(2+)</name>
        <dbReference type="ChEBI" id="CHEBI:18420"/>
        <label>1</label>
        <note>catalytic</note>
    </ligand>
</feature>
<feature type="binding site" evidence="1">
    <location>
        <position position="508"/>
    </location>
    <ligand>
        <name>Mg(2+)</name>
        <dbReference type="ChEBI" id="CHEBI:18420"/>
        <label>1</label>
        <note>catalytic</note>
    </ligand>
</feature>
<feature type="binding site" evidence="1">
    <location>
        <position position="508"/>
    </location>
    <ligand>
        <name>Mg(2+)</name>
        <dbReference type="ChEBI" id="CHEBI:18420"/>
        <label>2</label>
    </ligand>
</feature>
<feature type="binding site" evidence="1">
    <location>
        <position position="510"/>
    </location>
    <ligand>
        <name>Mg(2+)</name>
        <dbReference type="ChEBI" id="CHEBI:18420"/>
        <label>2</label>
    </ligand>
</feature>
<feature type="site" description="Interaction with DNA" evidence="1">
    <location>
        <position position="460"/>
    </location>
</feature>
<feature type="site" description="Interaction with DNA" evidence="1">
    <location>
        <position position="463"/>
    </location>
</feature>
<accession>Q92H87</accession>
<name>GYRB_RICCN</name>
<dbReference type="EC" id="5.6.2.2" evidence="1"/>
<dbReference type="EMBL" id="AE006914">
    <property type="protein sequence ID" value="AAL03422.1"/>
    <property type="molecule type" value="Genomic_DNA"/>
</dbReference>
<dbReference type="PIR" id="D97810">
    <property type="entry name" value="D97810"/>
</dbReference>
<dbReference type="RefSeq" id="WP_010977488.1">
    <property type="nucleotide sequence ID" value="NC_003103.1"/>
</dbReference>
<dbReference type="SMR" id="Q92H87"/>
<dbReference type="GeneID" id="927852"/>
<dbReference type="KEGG" id="rco:RC0884"/>
<dbReference type="PATRIC" id="fig|272944.4.peg.1007"/>
<dbReference type="HOGENOM" id="CLU_006146_0_1_5"/>
<dbReference type="Proteomes" id="UP000000816">
    <property type="component" value="Chromosome"/>
</dbReference>
<dbReference type="GO" id="GO:0005694">
    <property type="term" value="C:chromosome"/>
    <property type="evidence" value="ECO:0007669"/>
    <property type="project" value="InterPro"/>
</dbReference>
<dbReference type="GO" id="GO:0005737">
    <property type="term" value="C:cytoplasm"/>
    <property type="evidence" value="ECO:0007669"/>
    <property type="project" value="UniProtKB-SubCell"/>
</dbReference>
<dbReference type="GO" id="GO:0005524">
    <property type="term" value="F:ATP binding"/>
    <property type="evidence" value="ECO:0007669"/>
    <property type="project" value="UniProtKB-UniRule"/>
</dbReference>
<dbReference type="GO" id="GO:0003677">
    <property type="term" value="F:DNA binding"/>
    <property type="evidence" value="ECO:0007669"/>
    <property type="project" value="UniProtKB-KW"/>
</dbReference>
<dbReference type="GO" id="GO:0003918">
    <property type="term" value="F:DNA topoisomerase type II (double strand cut, ATP-hydrolyzing) activity"/>
    <property type="evidence" value="ECO:0007669"/>
    <property type="project" value="UniProtKB-UniRule"/>
</dbReference>
<dbReference type="GO" id="GO:0046872">
    <property type="term" value="F:metal ion binding"/>
    <property type="evidence" value="ECO:0007669"/>
    <property type="project" value="UniProtKB-KW"/>
</dbReference>
<dbReference type="GO" id="GO:0006265">
    <property type="term" value="P:DNA topological change"/>
    <property type="evidence" value="ECO:0007669"/>
    <property type="project" value="UniProtKB-UniRule"/>
</dbReference>
<dbReference type="GO" id="GO:0006261">
    <property type="term" value="P:DNA-templated DNA replication"/>
    <property type="evidence" value="ECO:0007669"/>
    <property type="project" value="UniProtKB-UniRule"/>
</dbReference>
<dbReference type="CDD" id="cd16928">
    <property type="entry name" value="HATPase_GyrB-like"/>
    <property type="match status" value="1"/>
</dbReference>
<dbReference type="CDD" id="cd00822">
    <property type="entry name" value="TopoII_Trans_DNA_gyrase"/>
    <property type="match status" value="1"/>
</dbReference>
<dbReference type="CDD" id="cd03366">
    <property type="entry name" value="TOPRIM_TopoIIA_GyrB"/>
    <property type="match status" value="1"/>
</dbReference>
<dbReference type="FunFam" id="3.30.230.10:FF:000005">
    <property type="entry name" value="DNA gyrase subunit B"/>
    <property type="match status" value="1"/>
</dbReference>
<dbReference type="FunFam" id="3.30.565.10:FF:000002">
    <property type="entry name" value="DNA gyrase subunit B"/>
    <property type="match status" value="1"/>
</dbReference>
<dbReference type="FunFam" id="3.40.50.670:FF:000001">
    <property type="entry name" value="DNA topoisomerase 2"/>
    <property type="match status" value="1"/>
</dbReference>
<dbReference type="Gene3D" id="3.30.230.10">
    <property type="match status" value="1"/>
</dbReference>
<dbReference type="Gene3D" id="3.40.50.670">
    <property type="match status" value="2"/>
</dbReference>
<dbReference type="Gene3D" id="3.30.565.10">
    <property type="entry name" value="Histidine kinase-like ATPase, C-terminal domain"/>
    <property type="match status" value="1"/>
</dbReference>
<dbReference type="HAMAP" id="MF_01898">
    <property type="entry name" value="GyrB"/>
    <property type="match status" value="1"/>
</dbReference>
<dbReference type="InterPro" id="IPR002288">
    <property type="entry name" value="DNA_gyrase_B_C"/>
</dbReference>
<dbReference type="InterPro" id="IPR011557">
    <property type="entry name" value="GyrB"/>
</dbReference>
<dbReference type="InterPro" id="IPR049353">
    <property type="entry name" value="GyrB_hook"/>
</dbReference>
<dbReference type="InterPro" id="IPR036890">
    <property type="entry name" value="HATPase_C_sf"/>
</dbReference>
<dbReference type="InterPro" id="IPR020568">
    <property type="entry name" value="Ribosomal_Su5_D2-typ_SF"/>
</dbReference>
<dbReference type="InterPro" id="IPR014721">
    <property type="entry name" value="Ribsml_uS5_D2-typ_fold_subgr"/>
</dbReference>
<dbReference type="InterPro" id="IPR001241">
    <property type="entry name" value="Topo_IIA"/>
</dbReference>
<dbReference type="InterPro" id="IPR013760">
    <property type="entry name" value="Topo_IIA-like_dom_sf"/>
</dbReference>
<dbReference type="InterPro" id="IPR000565">
    <property type="entry name" value="Topo_IIA_B"/>
</dbReference>
<dbReference type="InterPro" id="IPR013759">
    <property type="entry name" value="Topo_IIA_B_C"/>
</dbReference>
<dbReference type="InterPro" id="IPR013506">
    <property type="entry name" value="Topo_IIA_bsu_dom2"/>
</dbReference>
<dbReference type="InterPro" id="IPR018522">
    <property type="entry name" value="TopoIIA_CS"/>
</dbReference>
<dbReference type="InterPro" id="IPR006171">
    <property type="entry name" value="TOPRIM_dom"/>
</dbReference>
<dbReference type="InterPro" id="IPR034160">
    <property type="entry name" value="TOPRIM_GyrB"/>
</dbReference>
<dbReference type="NCBIfam" id="TIGR01059">
    <property type="entry name" value="gyrB"/>
    <property type="match status" value="1"/>
</dbReference>
<dbReference type="NCBIfam" id="NF004189">
    <property type="entry name" value="PRK05644.1"/>
    <property type="match status" value="1"/>
</dbReference>
<dbReference type="NCBIfam" id="NF011501">
    <property type="entry name" value="PRK14939.1"/>
    <property type="match status" value="1"/>
</dbReference>
<dbReference type="PANTHER" id="PTHR45866:SF1">
    <property type="entry name" value="DNA GYRASE SUBUNIT B, MITOCHONDRIAL"/>
    <property type="match status" value="1"/>
</dbReference>
<dbReference type="PANTHER" id="PTHR45866">
    <property type="entry name" value="DNA GYRASE/TOPOISOMERASE SUBUNIT B"/>
    <property type="match status" value="1"/>
</dbReference>
<dbReference type="Pfam" id="PF00204">
    <property type="entry name" value="DNA_gyraseB"/>
    <property type="match status" value="1"/>
</dbReference>
<dbReference type="Pfam" id="PF00986">
    <property type="entry name" value="DNA_gyraseB_C"/>
    <property type="match status" value="1"/>
</dbReference>
<dbReference type="Pfam" id="PF21249">
    <property type="entry name" value="GyrB_hook"/>
    <property type="match status" value="1"/>
</dbReference>
<dbReference type="Pfam" id="PF02518">
    <property type="entry name" value="HATPase_c"/>
    <property type="match status" value="1"/>
</dbReference>
<dbReference type="Pfam" id="PF01751">
    <property type="entry name" value="Toprim"/>
    <property type="match status" value="1"/>
</dbReference>
<dbReference type="PRINTS" id="PR01159">
    <property type="entry name" value="DNAGYRASEB"/>
</dbReference>
<dbReference type="PRINTS" id="PR00418">
    <property type="entry name" value="TPI2FAMILY"/>
</dbReference>
<dbReference type="SMART" id="SM00387">
    <property type="entry name" value="HATPase_c"/>
    <property type="match status" value="1"/>
</dbReference>
<dbReference type="SMART" id="SM00433">
    <property type="entry name" value="TOP2c"/>
    <property type="match status" value="1"/>
</dbReference>
<dbReference type="SUPFAM" id="SSF55874">
    <property type="entry name" value="ATPase domain of HSP90 chaperone/DNA topoisomerase II/histidine kinase"/>
    <property type="match status" value="1"/>
</dbReference>
<dbReference type="SUPFAM" id="SSF54211">
    <property type="entry name" value="Ribosomal protein S5 domain 2-like"/>
    <property type="match status" value="1"/>
</dbReference>
<dbReference type="SUPFAM" id="SSF56719">
    <property type="entry name" value="Type II DNA topoisomerase"/>
    <property type="match status" value="1"/>
</dbReference>
<dbReference type="PROSITE" id="PS00177">
    <property type="entry name" value="TOPOISOMERASE_II"/>
    <property type="match status" value="1"/>
</dbReference>
<dbReference type="PROSITE" id="PS50880">
    <property type="entry name" value="TOPRIM"/>
    <property type="match status" value="1"/>
</dbReference>
<reference key="1">
    <citation type="journal article" date="2001" name="Science">
        <title>Mechanisms of evolution in Rickettsia conorii and R. prowazekii.</title>
        <authorList>
            <person name="Ogata H."/>
            <person name="Audic S."/>
            <person name="Renesto-Audiffren P."/>
            <person name="Fournier P.-E."/>
            <person name="Barbe V."/>
            <person name="Samson D."/>
            <person name="Roux V."/>
            <person name="Cossart P."/>
            <person name="Weissenbach J."/>
            <person name="Claverie J.-M."/>
            <person name="Raoult D."/>
        </authorList>
    </citation>
    <scope>NUCLEOTIDE SEQUENCE [LARGE SCALE GENOMIC DNA]</scope>
    <source>
        <strain>ATCC VR-613 / Malish 7</strain>
    </source>
</reference>
<proteinExistence type="inferred from homology"/>
<protein>
    <recommendedName>
        <fullName evidence="1">DNA gyrase subunit B</fullName>
        <ecNumber evidence="1">5.6.2.2</ecNumber>
    </recommendedName>
</protein>
<keyword id="KW-0067">ATP-binding</keyword>
<keyword id="KW-0963">Cytoplasm</keyword>
<keyword id="KW-0238">DNA-binding</keyword>
<keyword id="KW-0413">Isomerase</keyword>
<keyword id="KW-0460">Magnesium</keyword>
<keyword id="KW-0479">Metal-binding</keyword>
<keyword id="KW-0547">Nucleotide-binding</keyword>
<keyword id="KW-0799">Topoisomerase</keyword>
<organism>
    <name type="scientific">Rickettsia conorii (strain ATCC VR-613 / Malish 7)</name>
    <dbReference type="NCBI Taxonomy" id="272944"/>
    <lineage>
        <taxon>Bacteria</taxon>
        <taxon>Pseudomonadati</taxon>
        <taxon>Pseudomonadota</taxon>
        <taxon>Alphaproteobacteria</taxon>
        <taxon>Rickettsiales</taxon>
        <taxon>Rickettsiaceae</taxon>
        <taxon>Rickettsieae</taxon>
        <taxon>Rickettsia</taxon>
        <taxon>spotted fever group</taxon>
    </lineage>
</organism>
<comment type="function">
    <text evidence="1">A type II topoisomerase that negatively supercoils closed circular double-stranded (ds) DNA in an ATP-dependent manner to modulate DNA topology and maintain chromosomes in an underwound state. Negative supercoiling favors strand separation, and DNA replication, transcription, recombination and repair, all of which involve strand separation. Also able to catalyze the interconversion of other topological isomers of dsDNA rings, including catenanes and knotted rings. Type II topoisomerases break and join 2 DNA strands simultaneously in an ATP-dependent manner.</text>
</comment>
<comment type="catalytic activity">
    <reaction evidence="1">
        <text>ATP-dependent breakage, passage and rejoining of double-stranded DNA.</text>
        <dbReference type="EC" id="5.6.2.2"/>
    </reaction>
</comment>
<comment type="cofactor">
    <cofactor evidence="1">
        <name>Mg(2+)</name>
        <dbReference type="ChEBI" id="CHEBI:18420"/>
    </cofactor>
    <cofactor evidence="1">
        <name>Mn(2+)</name>
        <dbReference type="ChEBI" id="CHEBI:29035"/>
    </cofactor>
    <cofactor evidence="1">
        <name>Ca(2+)</name>
        <dbReference type="ChEBI" id="CHEBI:29108"/>
    </cofactor>
    <text evidence="1">Binds two Mg(2+) per subunit. The magnesium ions form salt bridges with both the protein and the DNA. Can also accept other divalent metal cations, such as Mn(2+) or Ca(2+).</text>
</comment>
<comment type="subunit">
    <text evidence="1">Heterotetramer, composed of two GyrA and two GyrB chains. In the heterotetramer, GyrA contains the active site tyrosine that forms a transient covalent intermediate with DNA, while GyrB binds cofactors and catalyzes ATP hydrolysis.</text>
</comment>
<comment type="subcellular location">
    <subcellularLocation>
        <location evidence="1">Cytoplasm</location>
    </subcellularLocation>
</comment>
<comment type="miscellaneous">
    <text evidence="1">Few gyrases are as efficient as E.coli at forming negative supercoils. Not all organisms have 2 type II topoisomerases; in organisms with a single type II topoisomerase this enzyme also has to decatenate newly replicated chromosomes.</text>
</comment>
<comment type="similarity">
    <text evidence="1">Belongs to the type II topoisomerase GyrB family.</text>
</comment>
<gene>
    <name evidence="1" type="primary">gyrB</name>
    <name type="ordered locus">RC0884</name>
</gene>